<name>Y1873_LISMC</name>
<dbReference type="EMBL" id="FM242711">
    <property type="protein sequence ID" value="CAS05631.1"/>
    <property type="molecule type" value="Genomic_DNA"/>
</dbReference>
<dbReference type="RefSeq" id="WP_003720177.1">
    <property type="nucleotide sequence ID" value="NC_012488.1"/>
</dbReference>
<dbReference type="SMR" id="C1KWF6"/>
<dbReference type="KEGG" id="lmc:Lm4b_01873"/>
<dbReference type="HOGENOM" id="CLU_177534_1_0_9"/>
<dbReference type="Gene3D" id="1.10.150.260">
    <property type="entry name" value="YozE SAM-like"/>
    <property type="match status" value="1"/>
</dbReference>
<dbReference type="HAMAP" id="MF_01538">
    <property type="entry name" value="UPF0346"/>
    <property type="match status" value="1"/>
</dbReference>
<dbReference type="InterPro" id="IPR010673">
    <property type="entry name" value="UPF0346"/>
</dbReference>
<dbReference type="InterPro" id="IPR023089">
    <property type="entry name" value="YozE_SAM-like"/>
</dbReference>
<dbReference type="InterPro" id="IPR036806">
    <property type="entry name" value="YozE_SAM-like_sf"/>
</dbReference>
<dbReference type="NCBIfam" id="NF010193">
    <property type="entry name" value="PRK13672.1"/>
    <property type="match status" value="1"/>
</dbReference>
<dbReference type="Pfam" id="PF06855">
    <property type="entry name" value="YozE_SAM_like"/>
    <property type="match status" value="1"/>
</dbReference>
<dbReference type="PIRSF" id="PIRSF037262">
    <property type="entry name" value="UCP037262"/>
    <property type="match status" value="1"/>
</dbReference>
<dbReference type="SUPFAM" id="SSF140652">
    <property type="entry name" value="YozE-like"/>
    <property type="match status" value="1"/>
</dbReference>
<organism>
    <name type="scientific">Listeria monocytogenes serotype 4b (strain CLIP80459)</name>
    <dbReference type="NCBI Taxonomy" id="568819"/>
    <lineage>
        <taxon>Bacteria</taxon>
        <taxon>Bacillati</taxon>
        <taxon>Bacillota</taxon>
        <taxon>Bacilli</taxon>
        <taxon>Bacillales</taxon>
        <taxon>Listeriaceae</taxon>
        <taxon>Listeria</taxon>
    </lineage>
</organism>
<feature type="chain" id="PRO_1000215419" description="UPF0346 protein Lm4b_01873">
    <location>
        <begin position="1"/>
        <end position="77"/>
    </location>
</feature>
<sequence length="77" mass="9403">MGRSFYHFLMTYRDPKLTDQKTEFANNAYRDHSFPKQTRNYHILCDYLEFNAPYLPGMSIFDELWDAYLLDEEKNKH</sequence>
<evidence type="ECO:0000255" key="1">
    <source>
        <dbReference type="HAMAP-Rule" id="MF_01538"/>
    </source>
</evidence>
<reference key="1">
    <citation type="journal article" date="2012" name="BMC Genomics">
        <title>Comparative genomics and transcriptomics of lineages I, II, and III strains of Listeria monocytogenes.</title>
        <authorList>
            <person name="Hain T."/>
            <person name="Ghai R."/>
            <person name="Billion A."/>
            <person name="Kuenne C.T."/>
            <person name="Steinweg C."/>
            <person name="Izar B."/>
            <person name="Mohamed W."/>
            <person name="Mraheil M."/>
            <person name="Domann E."/>
            <person name="Schaffrath S."/>
            <person name="Karst U."/>
            <person name="Goesmann A."/>
            <person name="Oehm S."/>
            <person name="Puhler A."/>
            <person name="Merkl R."/>
            <person name="Vorwerk S."/>
            <person name="Glaser P."/>
            <person name="Garrido P."/>
            <person name="Rusniok C."/>
            <person name="Buchrieser C."/>
            <person name="Goebel W."/>
            <person name="Chakraborty T."/>
        </authorList>
    </citation>
    <scope>NUCLEOTIDE SEQUENCE [LARGE SCALE GENOMIC DNA]</scope>
    <source>
        <strain>CLIP80459</strain>
    </source>
</reference>
<protein>
    <recommendedName>
        <fullName evidence="1">UPF0346 protein Lm4b_01873</fullName>
    </recommendedName>
</protein>
<comment type="similarity">
    <text evidence="1">Belongs to the UPF0346 family.</text>
</comment>
<proteinExistence type="inferred from homology"/>
<gene>
    <name type="ordered locus">Lm4b_01873</name>
</gene>
<accession>C1KWF6</accession>